<proteinExistence type="evidence at protein level"/>
<evidence type="ECO:0000269" key="1">
    <source>
    </source>
</evidence>
<evidence type="ECO:0000269" key="2">
    <source>
    </source>
</evidence>
<evidence type="ECO:0000269" key="3">
    <source>
    </source>
</evidence>
<evidence type="ECO:0000269" key="4">
    <source>
    </source>
</evidence>
<evidence type="ECO:0000305" key="5"/>
<evidence type="ECO:0007829" key="6">
    <source>
        <dbReference type="PDB" id="8HFC"/>
    </source>
</evidence>
<gene>
    <name type="primary">SHR5</name>
    <name type="synonym">ERF4</name>
    <name type="ordered locus">YOL110W</name>
    <name type="ORF">HRC237</name>
</gene>
<sequence length="237" mass="26542">MCDSHQKEEDNANTSERALFFNYHEFSYSFYEDLGSEDAKPTEHDEDHKLCITHFPNVYAARGSAEFQVTRVVRVPRRFDESRSSLETPQFSTQLPGSEPAAIVGDDGTSFVRCGRYDIGDHVFGCSSVSPLSEYLSAAELAEVVHRVNGFLLREEGEVFGWRNLSGLLLDMLTGGLWSWVLGPLLSRPVFQESLALEQYVAQLNSPGGLLHERGVRLVLPRRSGCLSLDFVVPRPK</sequence>
<feature type="chain" id="PRO_0000213988" description="Ras modification protein ERF4">
    <location>
        <begin position="1"/>
        <end position="237"/>
    </location>
</feature>
<feature type="mutagenesis site" description="In ERF4-1; loss of function." evidence="2">
    <original>S</original>
    <variation>P</variation>
    <location>
        <position position="128"/>
    </location>
</feature>
<feature type="mutagenesis site" description="In ERF4-2; loss of function." evidence="2">
    <original>V</original>
    <variation>K</variation>
    <location>
        <position position="148"/>
    </location>
</feature>
<feature type="mutagenesis site" description="In ERF4-3; loss of function." evidence="2">
    <original>L</original>
    <variation>P</variation>
    <location>
        <position position="204"/>
    </location>
</feature>
<feature type="strand" evidence="6">
    <location>
        <begin position="27"/>
        <end position="35"/>
    </location>
</feature>
<feature type="helix" evidence="6">
    <location>
        <begin position="46"/>
        <end position="48"/>
    </location>
</feature>
<feature type="helix" evidence="6">
    <location>
        <begin position="66"/>
        <end position="69"/>
    </location>
</feature>
<feature type="strand" evidence="6">
    <location>
        <begin position="70"/>
        <end position="75"/>
    </location>
</feature>
<feature type="turn" evidence="6">
    <location>
        <begin position="83"/>
        <end position="87"/>
    </location>
</feature>
<feature type="turn" evidence="6">
    <location>
        <begin position="119"/>
        <end position="121"/>
    </location>
</feature>
<feature type="strand" evidence="6">
    <location>
        <begin position="126"/>
        <end position="128"/>
    </location>
</feature>
<feature type="helix" evidence="6">
    <location>
        <begin position="131"/>
        <end position="134"/>
    </location>
</feature>
<feature type="helix" evidence="6">
    <location>
        <begin position="138"/>
        <end position="156"/>
    </location>
</feature>
<feature type="helix" evidence="6">
    <location>
        <begin position="162"/>
        <end position="173"/>
    </location>
</feature>
<feature type="turn" evidence="6">
    <location>
        <begin position="174"/>
        <end position="176"/>
    </location>
</feature>
<feature type="helix" evidence="6">
    <location>
        <begin position="178"/>
        <end position="182"/>
    </location>
</feature>
<feature type="turn" evidence="6">
    <location>
        <begin position="183"/>
        <end position="186"/>
    </location>
</feature>
<feature type="helix" evidence="6">
    <location>
        <begin position="189"/>
        <end position="191"/>
    </location>
</feature>
<feature type="helix" evidence="6">
    <location>
        <begin position="192"/>
        <end position="205"/>
    </location>
</feature>
<feature type="helix" evidence="6">
    <location>
        <begin position="210"/>
        <end position="214"/>
    </location>
</feature>
<feature type="turn" evidence="6">
    <location>
        <begin position="221"/>
        <end position="226"/>
    </location>
</feature>
<feature type="strand" evidence="6">
    <location>
        <begin position="227"/>
        <end position="234"/>
    </location>
</feature>
<keyword id="KW-0002">3D-structure</keyword>
<keyword id="KW-0256">Endoplasmic reticulum</keyword>
<keyword id="KW-0472">Membrane</keyword>
<keyword id="KW-1185">Reference proteome</keyword>
<reference key="1">
    <citation type="journal article" date="1995" name="Mol. Cell. Biol.">
        <title>Mutations in the SHR5 gene of Saccharomyces cerevisiae suppress Ras function and block membrane attachment and palmitoylation of Ras proteins.</title>
        <authorList>
            <person name="Jung V."/>
            <person name="Chen L."/>
            <person name="Hofmann S.L."/>
            <person name="Wigler M."/>
            <person name="Powers S."/>
        </authorList>
    </citation>
    <scope>NUCLEOTIDE SEQUENCE [GENOMIC DNA]</scope>
    <scope>FUNCTION</scope>
    <source>
        <strain>SP1</strain>
    </source>
</reference>
<reference key="2">
    <citation type="journal article" date="1995" name="Yeast">
        <title>Sequence analysis of a 44 kb DNA fragment of yeast chromosome XV including the Ty1-H3 retrotransposon, the suf1(+) frameshift suppressor gene for tRNA-Gly, the yeast transfer RNA-Thr-1a and a delta element.</title>
        <authorList>
            <person name="Vandenbol M."/>
            <person name="Durand P."/>
            <person name="Portetelle D."/>
            <person name="Hilger F."/>
        </authorList>
    </citation>
    <scope>NUCLEOTIDE SEQUENCE [GENOMIC DNA]</scope>
</reference>
<reference key="3">
    <citation type="journal article" date="1997" name="Nature">
        <title>The nucleotide sequence of Saccharomyces cerevisiae chromosome XV.</title>
        <authorList>
            <person name="Dujon B."/>
            <person name="Albermann K."/>
            <person name="Aldea M."/>
            <person name="Alexandraki D."/>
            <person name="Ansorge W."/>
            <person name="Arino J."/>
            <person name="Benes V."/>
            <person name="Bohn C."/>
            <person name="Bolotin-Fukuhara M."/>
            <person name="Bordonne R."/>
            <person name="Boyer J."/>
            <person name="Camasses A."/>
            <person name="Casamayor A."/>
            <person name="Casas C."/>
            <person name="Cheret G."/>
            <person name="Cziepluch C."/>
            <person name="Daignan-Fornier B."/>
            <person name="Dang V.-D."/>
            <person name="de Haan M."/>
            <person name="Delius H."/>
            <person name="Durand P."/>
            <person name="Fairhead C."/>
            <person name="Feldmann H."/>
            <person name="Gaillon L."/>
            <person name="Galisson F."/>
            <person name="Gamo F.-J."/>
            <person name="Gancedo C."/>
            <person name="Goffeau A."/>
            <person name="Goulding S.E."/>
            <person name="Grivell L.A."/>
            <person name="Habbig B."/>
            <person name="Hand N.J."/>
            <person name="Hani J."/>
            <person name="Hattenhorst U."/>
            <person name="Hebling U."/>
            <person name="Hernando Y."/>
            <person name="Herrero E."/>
            <person name="Heumann K."/>
            <person name="Hiesel R."/>
            <person name="Hilger F."/>
            <person name="Hofmann B."/>
            <person name="Hollenberg C.P."/>
            <person name="Hughes B."/>
            <person name="Jauniaux J.-C."/>
            <person name="Kalogeropoulos A."/>
            <person name="Katsoulou C."/>
            <person name="Kordes E."/>
            <person name="Lafuente M.J."/>
            <person name="Landt O."/>
            <person name="Louis E.J."/>
            <person name="Maarse A.C."/>
            <person name="Madania A."/>
            <person name="Mannhaupt G."/>
            <person name="Marck C."/>
            <person name="Martin R.P."/>
            <person name="Mewes H.-W."/>
            <person name="Michaux G."/>
            <person name="Paces V."/>
            <person name="Parle-McDermott A.G."/>
            <person name="Pearson B.M."/>
            <person name="Perrin A."/>
            <person name="Pettersson B."/>
            <person name="Poch O."/>
            <person name="Pohl T.M."/>
            <person name="Poirey R."/>
            <person name="Portetelle D."/>
            <person name="Pujol A."/>
            <person name="Purnelle B."/>
            <person name="Ramezani Rad M."/>
            <person name="Rechmann S."/>
            <person name="Schwager C."/>
            <person name="Schweizer M."/>
            <person name="Sor F."/>
            <person name="Sterky F."/>
            <person name="Tarassov I.A."/>
            <person name="Teodoru C."/>
            <person name="Tettelin H."/>
            <person name="Thierry A."/>
            <person name="Tobiasch E."/>
            <person name="Tzermia M."/>
            <person name="Uhlen M."/>
            <person name="Unseld M."/>
            <person name="Valens M."/>
            <person name="Vandenbol M."/>
            <person name="Vetter I."/>
            <person name="Vlcek C."/>
            <person name="Voet M."/>
            <person name="Volckaert G."/>
            <person name="Voss H."/>
            <person name="Wambutt R."/>
            <person name="Wedler H."/>
            <person name="Wiemann S."/>
            <person name="Winsor B."/>
            <person name="Wolfe K.H."/>
            <person name="Zollner A."/>
            <person name="Zumstein E."/>
            <person name="Kleine K."/>
        </authorList>
    </citation>
    <scope>NUCLEOTIDE SEQUENCE [LARGE SCALE GENOMIC DNA]</scope>
    <source>
        <strain>ATCC 204508 / S288c</strain>
    </source>
</reference>
<reference key="4">
    <citation type="journal article" date="2014" name="G3 (Bethesda)">
        <title>The reference genome sequence of Saccharomyces cerevisiae: Then and now.</title>
        <authorList>
            <person name="Engel S.R."/>
            <person name="Dietrich F.S."/>
            <person name="Fisk D.G."/>
            <person name="Binkley G."/>
            <person name="Balakrishnan R."/>
            <person name="Costanzo M.C."/>
            <person name="Dwight S.S."/>
            <person name="Hitz B.C."/>
            <person name="Karra K."/>
            <person name="Nash R.S."/>
            <person name="Weng S."/>
            <person name="Wong E.D."/>
            <person name="Lloyd P."/>
            <person name="Skrzypek M.S."/>
            <person name="Miyasato S.R."/>
            <person name="Simison M."/>
            <person name="Cherry J.M."/>
        </authorList>
    </citation>
    <scope>GENOME REANNOTATION</scope>
    <source>
        <strain>ATCC 204508 / S288c</strain>
    </source>
</reference>
<reference key="5">
    <citation type="journal article" date="2002" name="J. Biol. Chem.">
        <title>Identification of a Ras palmitoyltransferase in Saccharomyces cerevisiae.</title>
        <authorList>
            <person name="Lobo S."/>
            <person name="Greentree W.K."/>
            <person name="Linder M.E."/>
            <person name="Deschenes R.J."/>
        </authorList>
    </citation>
    <scope>FUNCTION</scope>
    <scope>INTERACTION WITH ERF2</scope>
</reference>
<reference key="6">
    <citation type="journal article" date="2002" name="J. Biol. Chem.">
        <title>Erf4p and Erf2p form an endoplasmic reticulum-associated complex involved in the plasma membrane localization of yeast Ras proteins.</title>
        <authorList>
            <person name="Zhao L."/>
            <person name="Lobo S."/>
            <person name="Dong X."/>
            <person name="Ault A.D."/>
            <person name="Deschenes R.J."/>
        </authorList>
    </citation>
    <scope>FUNCTION</scope>
    <scope>MUTAGENESIS OF SER-128; VAL-148 AND LEU-204</scope>
    <scope>INTERACTION WITH ERF2</scope>
    <scope>SUBCELLULAR LOCATION</scope>
</reference>
<reference key="7">
    <citation type="journal article" date="2003" name="Nature">
        <title>Global analysis of protein expression in yeast.</title>
        <authorList>
            <person name="Ghaemmaghami S."/>
            <person name="Huh W.-K."/>
            <person name="Bower K."/>
            <person name="Howson R.W."/>
            <person name="Belle A."/>
            <person name="Dephoure N."/>
            <person name="O'Shea E.K."/>
            <person name="Weissman J.S."/>
        </authorList>
    </citation>
    <scope>LEVEL OF PROTEIN EXPRESSION [LARGE SCALE ANALYSIS]</scope>
</reference>
<dbReference type="EMBL" id="U18313">
    <property type="protein sequence ID" value="AAA67935.1"/>
    <property type="molecule type" value="Genomic_DNA"/>
</dbReference>
<dbReference type="EMBL" id="Z48149">
    <property type="protein sequence ID" value="CAA88152.1"/>
    <property type="molecule type" value="Genomic_DNA"/>
</dbReference>
<dbReference type="EMBL" id="Z74852">
    <property type="protein sequence ID" value="CAA99129.1"/>
    <property type="molecule type" value="Genomic_DNA"/>
</dbReference>
<dbReference type="EMBL" id="BK006948">
    <property type="protein sequence ID" value="DAA10673.1"/>
    <property type="molecule type" value="Genomic_DNA"/>
</dbReference>
<dbReference type="PIR" id="S51889">
    <property type="entry name" value="S51889"/>
</dbReference>
<dbReference type="RefSeq" id="NP_014531.1">
    <property type="nucleotide sequence ID" value="NM_001183364.1"/>
</dbReference>
<dbReference type="PDB" id="8HFC">
    <property type="method" value="EM"/>
    <property type="resolution" value="3.50 A"/>
    <property type="chains" value="B=1-237"/>
</dbReference>
<dbReference type="PDBsum" id="8HFC"/>
<dbReference type="EMDB" id="EMD-34717"/>
<dbReference type="SMR" id="P41912"/>
<dbReference type="BioGRID" id="34290">
    <property type="interactions" value="98"/>
</dbReference>
<dbReference type="ComplexPortal" id="CPX-813">
    <property type="entry name" value="Palmitoyltransferase ERF2/SHR5 complex"/>
</dbReference>
<dbReference type="DIP" id="DIP-7228N"/>
<dbReference type="FunCoup" id="P41912">
    <property type="interactions" value="85"/>
</dbReference>
<dbReference type="IntAct" id="P41912">
    <property type="interactions" value="2"/>
</dbReference>
<dbReference type="MINT" id="P41912"/>
<dbReference type="STRING" id="4932.YOL110W"/>
<dbReference type="iPTMnet" id="P41912"/>
<dbReference type="PaxDb" id="4932-YOL110W"/>
<dbReference type="PeptideAtlas" id="P41912"/>
<dbReference type="EnsemblFungi" id="YOL110W_mRNA">
    <property type="protein sequence ID" value="YOL110W"/>
    <property type="gene ID" value="YOL110W"/>
</dbReference>
<dbReference type="GeneID" id="854039"/>
<dbReference type="KEGG" id="sce:YOL110W"/>
<dbReference type="AGR" id="SGD:S000005470"/>
<dbReference type="SGD" id="S000005470">
    <property type="gene designation" value="SHR5"/>
</dbReference>
<dbReference type="VEuPathDB" id="FungiDB:YOL110W"/>
<dbReference type="eggNOG" id="ENOG502S30T">
    <property type="taxonomic scope" value="Eukaryota"/>
</dbReference>
<dbReference type="HOGENOM" id="CLU_087349_0_0_1"/>
<dbReference type="InParanoid" id="P41912"/>
<dbReference type="OMA" id="CITHFPN"/>
<dbReference type="OrthoDB" id="5377273at2759"/>
<dbReference type="BioCyc" id="YEAST:G3O-33507-MONOMER"/>
<dbReference type="Reactome" id="R-SCE-6798695">
    <property type="pathway name" value="Neutrophil degranulation"/>
</dbReference>
<dbReference type="BioGRID-ORCS" id="854039">
    <property type="hits" value="3 hits in 10 CRISPR screens"/>
</dbReference>
<dbReference type="ChiTaRS" id="SHR5">
    <property type="organism name" value="yeast"/>
</dbReference>
<dbReference type="PRO" id="PR:P41912"/>
<dbReference type="Proteomes" id="UP000002311">
    <property type="component" value="Chromosome XV"/>
</dbReference>
<dbReference type="RNAct" id="P41912">
    <property type="molecule type" value="protein"/>
</dbReference>
<dbReference type="GO" id="GO:0005783">
    <property type="term" value="C:endoplasmic reticulum"/>
    <property type="evidence" value="ECO:0007005"/>
    <property type="project" value="SGD"/>
</dbReference>
<dbReference type="GO" id="GO:0005789">
    <property type="term" value="C:endoplasmic reticulum membrane"/>
    <property type="evidence" value="ECO:0000314"/>
    <property type="project" value="ComplexPortal"/>
</dbReference>
<dbReference type="GO" id="GO:0031211">
    <property type="term" value="C:endoplasmic reticulum palmitoyltransferase complex"/>
    <property type="evidence" value="ECO:0000353"/>
    <property type="project" value="ComplexPortal"/>
</dbReference>
<dbReference type="GO" id="GO:0006612">
    <property type="term" value="P:protein targeting to membrane"/>
    <property type="evidence" value="ECO:0000315"/>
    <property type="project" value="SGD"/>
</dbReference>
<dbReference type="InterPro" id="IPR019383">
    <property type="entry name" value="Golgin_A_7/ERF4"/>
</dbReference>
<dbReference type="InterPro" id="IPR051371">
    <property type="entry name" value="Ras_palmitoyltransferase"/>
</dbReference>
<dbReference type="PANTHER" id="PTHR13254">
    <property type="entry name" value="GOLGI AUTOANTIGEN, GOLGIN SUBFAMILY A, 7"/>
    <property type="match status" value="1"/>
</dbReference>
<dbReference type="PANTHER" id="PTHR13254:SF0">
    <property type="entry name" value="GOLGIN SUBFAMILY A MEMBER 7_ERF4 DOMAIN-CONTAINING PROTEIN"/>
    <property type="match status" value="1"/>
</dbReference>
<dbReference type="Pfam" id="PF10256">
    <property type="entry name" value="Erf4"/>
    <property type="match status" value="1"/>
</dbReference>
<comment type="function">
    <text evidence="1 2 4">The ERF2-SHR5 complex is a palmitoyltransferase specific for Ras proteins (PubMed:12193598, PubMed:12379641, PubMed:7532279). Palmitoylates RAS2, which is required for its proper plasma membrane localization (PubMed:12193598, PubMed:12379641, PubMed:7532279).</text>
</comment>
<comment type="subunit">
    <text evidence="1 2">Interacts with ERF2.</text>
</comment>
<comment type="interaction">
    <interactant intactId="EBI-2087870">
        <id>P41912</id>
    </interactant>
    <interactant intactId="EBI-37230">
        <id>Q06551</id>
        <label>ERF2</label>
    </interactant>
    <organismsDiffer>false</organismsDiffer>
    <experiments>2</experiments>
</comment>
<comment type="subcellular location">
    <subcellularLocation>
        <location evidence="2">Endoplasmic reticulum membrane</location>
        <topology evidence="2">Peripheral membrane protein</topology>
    </subcellularLocation>
</comment>
<comment type="miscellaneous">
    <text evidence="3">Present with 937 molecules/cell in log phase SD medium.</text>
</comment>
<comment type="similarity">
    <text evidence="5">Belongs to the ERF4 family.</text>
</comment>
<protein>
    <recommendedName>
        <fullName>Ras modification protein ERF4</fullName>
    </recommendedName>
    <alternativeName>
        <fullName>Hyperactive Ras suppressor protein 5</fullName>
    </alternativeName>
</protein>
<accession>P41912</accession>
<accession>D6W1V7</accession>
<organism>
    <name type="scientific">Saccharomyces cerevisiae (strain ATCC 204508 / S288c)</name>
    <name type="common">Baker's yeast</name>
    <dbReference type="NCBI Taxonomy" id="559292"/>
    <lineage>
        <taxon>Eukaryota</taxon>
        <taxon>Fungi</taxon>
        <taxon>Dikarya</taxon>
        <taxon>Ascomycota</taxon>
        <taxon>Saccharomycotina</taxon>
        <taxon>Saccharomycetes</taxon>
        <taxon>Saccharomycetales</taxon>
        <taxon>Saccharomycetaceae</taxon>
        <taxon>Saccharomyces</taxon>
    </lineage>
</organism>
<name>ERFD_YEAST</name>